<proteinExistence type="inferred from homology"/>
<dbReference type="EC" id="2.7.2.8" evidence="1"/>
<dbReference type="EMBL" id="CP000698">
    <property type="protein sequence ID" value="ABQ24441.1"/>
    <property type="molecule type" value="Genomic_DNA"/>
</dbReference>
<dbReference type="RefSeq" id="WP_011937170.1">
    <property type="nucleotide sequence ID" value="NC_009483.1"/>
</dbReference>
<dbReference type="SMR" id="A5GDA1"/>
<dbReference type="STRING" id="351605.Gura_0225"/>
<dbReference type="KEGG" id="gur:Gura_0225"/>
<dbReference type="HOGENOM" id="CLU_053680_0_0_7"/>
<dbReference type="OrthoDB" id="9803155at2"/>
<dbReference type="UniPathway" id="UPA00068">
    <property type="reaction ID" value="UER00107"/>
</dbReference>
<dbReference type="Proteomes" id="UP000006695">
    <property type="component" value="Chromosome"/>
</dbReference>
<dbReference type="GO" id="GO:0005737">
    <property type="term" value="C:cytoplasm"/>
    <property type="evidence" value="ECO:0007669"/>
    <property type="project" value="UniProtKB-SubCell"/>
</dbReference>
<dbReference type="GO" id="GO:0003991">
    <property type="term" value="F:acetylglutamate kinase activity"/>
    <property type="evidence" value="ECO:0007669"/>
    <property type="project" value="UniProtKB-UniRule"/>
</dbReference>
<dbReference type="GO" id="GO:0005524">
    <property type="term" value="F:ATP binding"/>
    <property type="evidence" value="ECO:0007669"/>
    <property type="project" value="UniProtKB-UniRule"/>
</dbReference>
<dbReference type="GO" id="GO:0042450">
    <property type="term" value="P:arginine biosynthetic process via ornithine"/>
    <property type="evidence" value="ECO:0007669"/>
    <property type="project" value="UniProtKB-UniRule"/>
</dbReference>
<dbReference type="GO" id="GO:0006526">
    <property type="term" value="P:L-arginine biosynthetic process"/>
    <property type="evidence" value="ECO:0007669"/>
    <property type="project" value="UniProtKB-UniPathway"/>
</dbReference>
<dbReference type="CDD" id="cd04250">
    <property type="entry name" value="AAK_NAGK-C"/>
    <property type="match status" value="1"/>
</dbReference>
<dbReference type="FunFam" id="3.40.1160.10:FF:000004">
    <property type="entry name" value="Acetylglutamate kinase"/>
    <property type="match status" value="1"/>
</dbReference>
<dbReference type="Gene3D" id="3.40.1160.10">
    <property type="entry name" value="Acetylglutamate kinase-like"/>
    <property type="match status" value="1"/>
</dbReference>
<dbReference type="HAMAP" id="MF_00082">
    <property type="entry name" value="ArgB"/>
    <property type="match status" value="1"/>
</dbReference>
<dbReference type="InterPro" id="IPR036393">
    <property type="entry name" value="AceGlu_kinase-like_sf"/>
</dbReference>
<dbReference type="InterPro" id="IPR004662">
    <property type="entry name" value="AcgluKinase_fam"/>
</dbReference>
<dbReference type="InterPro" id="IPR037528">
    <property type="entry name" value="ArgB"/>
</dbReference>
<dbReference type="InterPro" id="IPR001048">
    <property type="entry name" value="Asp/Glu/Uridylate_kinase"/>
</dbReference>
<dbReference type="InterPro" id="IPR001057">
    <property type="entry name" value="Glu/AcGlu_kinase"/>
</dbReference>
<dbReference type="InterPro" id="IPR041727">
    <property type="entry name" value="NAGK-C"/>
</dbReference>
<dbReference type="NCBIfam" id="TIGR00761">
    <property type="entry name" value="argB"/>
    <property type="match status" value="1"/>
</dbReference>
<dbReference type="PANTHER" id="PTHR23342">
    <property type="entry name" value="N-ACETYLGLUTAMATE SYNTHASE"/>
    <property type="match status" value="1"/>
</dbReference>
<dbReference type="PANTHER" id="PTHR23342:SF0">
    <property type="entry name" value="N-ACETYLGLUTAMATE SYNTHASE, MITOCHONDRIAL"/>
    <property type="match status" value="1"/>
</dbReference>
<dbReference type="Pfam" id="PF00696">
    <property type="entry name" value="AA_kinase"/>
    <property type="match status" value="1"/>
</dbReference>
<dbReference type="PIRSF" id="PIRSF000728">
    <property type="entry name" value="NAGK"/>
    <property type="match status" value="1"/>
</dbReference>
<dbReference type="PRINTS" id="PR00474">
    <property type="entry name" value="GLU5KINASE"/>
</dbReference>
<dbReference type="SUPFAM" id="SSF53633">
    <property type="entry name" value="Carbamate kinase-like"/>
    <property type="match status" value="1"/>
</dbReference>
<keyword id="KW-0028">Amino-acid biosynthesis</keyword>
<keyword id="KW-0055">Arginine biosynthesis</keyword>
<keyword id="KW-0067">ATP-binding</keyword>
<keyword id="KW-0963">Cytoplasm</keyword>
<keyword id="KW-0418">Kinase</keyword>
<keyword id="KW-0547">Nucleotide-binding</keyword>
<keyword id="KW-1185">Reference proteome</keyword>
<keyword id="KW-0808">Transferase</keyword>
<reference key="1">
    <citation type="submission" date="2007-05" db="EMBL/GenBank/DDBJ databases">
        <title>Complete sequence of Geobacter uraniireducens Rf4.</title>
        <authorList>
            <consortium name="US DOE Joint Genome Institute"/>
            <person name="Copeland A."/>
            <person name="Lucas S."/>
            <person name="Lapidus A."/>
            <person name="Barry K."/>
            <person name="Detter J.C."/>
            <person name="Glavina del Rio T."/>
            <person name="Hammon N."/>
            <person name="Israni S."/>
            <person name="Dalin E."/>
            <person name="Tice H."/>
            <person name="Pitluck S."/>
            <person name="Chertkov O."/>
            <person name="Brettin T."/>
            <person name="Bruce D."/>
            <person name="Han C."/>
            <person name="Schmutz J."/>
            <person name="Larimer F."/>
            <person name="Land M."/>
            <person name="Hauser L."/>
            <person name="Kyrpides N."/>
            <person name="Mikhailova N."/>
            <person name="Shelobolina E."/>
            <person name="Aklujkar M."/>
            <person name="Lovley D."/>
            <person name="Richardson P."/>
        </authorList>
    </citation>
    <scope>NUCLEOTIDE SEQUENCE [LARGE SCALE GENOMIC DNA]</scope>
    <source>
        <strain>ATCC BAA-1134 / JCM 13001 / Rf4</strain>
    </source>
</reference>
<protein>
    <recommendedName>
        <fullName evidence="1">Acetylglutamate kinase</fullName>
        <ecNumber evidence="1">2.7.2.8</ecNumber>
    </recommendedName>
    <alternativeName>
        <fullName evidence="1">N-acetyl-L-glutamate 5-phosphotransferase</fullName>
    </alternativeName>
    <alternativeName>
        <fullName evidence="1">NAG kinase</fullName>
        <shortName evidence="1">NAGK</shortName>
    </alternativeName>
</protein>
<name>ARGB_GEOUR</name>
<feature type="chain" id="PRO_1000075311" description="Acetylglutamate kinase">
    <location>
        <begin position="1"/>
        <end position="292"/>
    </location>
</feature>
<feature type="binding site" evidence="1">
    <location>
        <begin position="64"/>
        <end position="65"/>
    </location>
    <ligand>
        <name>substrate</name>
    </ligand>
</feature>
<feature type="binding site" evidence="1">
    <location>
        <position position="86"/>
    </location>
    <ligand>
        <name>substrate</name>
    </ligand>
</feature>
<feature type="binding site" evidence="1">
    <location>
        <position position="190"/>
    </location>
    <ligand>
        <name>substrate</name>
    </ligand>
</feature>
<feature type="site" description="Transition state stabilizer" evidence="1">
    <location>
        <position position="29"/>
    </location>
</feature>
<feature type="site" description="Transition state stabilizer" evidence="1">
    <location>
        <position position="250"/>
    </location>
</feature>
<sequence length="292" mass="30658">MHKLIEKANTLMEALPYIRRFSGKTIVIKYGGHAMADEALKKSFAMDVILLKYIGINPVIVHGGGPQINETLKRYGIVSEFVKGMRVTDAATMGVVEMVLTGQVNKEVVGYINQHGGRAVGLSGKDGGLLLCRKLLQEVKKDDGTIEKVDIGFVGDITDVDSTILVTLEAGGFIPVIAPVGVGAGGESYNINADLVAGKVAAALKAEKLILLTDVPGVKDQEGHLLSSIALADVPALIDNGTITGGMIPKVTCCTDALTGGVHKAHIVDGRVEHAILLEIFTNVGIGTEILG</sequence>
<comment type="function">
    <text evidence="1">Catalyzes the ATP-dependent phosphorylation of N-acetyl-L-glutamate.</text>
</comment>
<comment type="catalytic activity">
    <reaction evidence="1">
        <text>N-acetyl-L-glutamate + ATP = N-acetyl-L-glutamyl 5-phosphate + ADP</text>
        <dbReference type="Rhea" id="RHEA:14629"/>
        <dbReference type="ChEBI" id="CHEBI:30616"/>
        <dbReference type="ChEBI" id="CHEBI:44337"/>
        <dbReference type="ChEBI" id="CHEBI:57936"/>
        <dbReference type="ChEBI" id="CHEBI:456216"/>
        <dbReference type="EC" id="2.7.2.8"/>
    </reaction>
</comment>
<comment type="pathway">
    <text evidence="1">Amino-acid biosynthesis; L-arginine biosynthesis; N(2)-acetyl-L-ornithine from L-glutamate: step 2/4.</text>
</comment>
<comment type="subcellular location">
    <subcellularLocation>
        <location evidence="1">Cytoplasm</location>
    </subcellularLocation>
</comment>
<comment type="similarity">
    <text evidence="1">Belongs to the acetylglutamate kinase family. ArgB subfamily.</text>
</comment>
<gene>
    <name evidence="1" type="primary">argB</name>
    <name type="ordered locus">Gura_0225</name>
</gene>
<organism>
    <name type="scientific">Geotalea uraniireducens (strain Rf4)</name>
    <name type="common">Geobacter uraniireducens</name>
    <dbReference type="NCBI Taxonomy" id="351605"/>
    <lineage>
        <taxon>Bacteria</taxon>
        <taxon>Pseudomonadati</taxon>
        <taxon>Thermodesulfobacteriota</taxon>
        <taxon>Desulfuromonadia</taxon>
        <taxon>Geobacterales</taxon>
        <taxon>Geobacteraceae</taxon>
        <taxon>Geotalea</taxon>
    </lineage>
</organism>
<evidence type="ECO:0000255" key="1">
    <source>
        <dbReference type="HAMAP-Rule" id="MF_00082"/>
    </source>
</evidence>
<accession>A5GDA1</accession>